<proteinExistence type="evidence at protein level"/>
<comment type="function">
    <text evidence="1 14 22">Transcription factor that plays a key role in chondrocytes differentiation and skeletal development (PubMed:24038782). Specifically binds the 5'-ACAAAG-3' DNA motif present in enhancers and super-enhancers and promotes expression of genes important for chondrogenesis, including cartilage matrix protein-coding genes COL2A1, COL4A2, COL9A1, COL11A2 and ACAN, SOX5 and SOX6 (PubMed:8640233). Also binds to some promoter regions (By similarity). Plays a central role in successive steps of chondrocyte differentiation (By similarity). Absolutely required for precartilaginous condensation, the first step in chondrogenesis during which skeletal progenitors differentiate into prechondrocytes (By similarity). Together with SOX5 and SOX6, required for overt chondrogenesis when condensed prechondrocytes differentiate into early stage chondrocytes, the second step in chondrogenesis (By similarity). Later, required to direct hypertrophic maturation and block osteoblast differentiation of growth plate chondrocytes: maintains chondrocyte columnar proliferation, delays prehypertrophy and then prevents osteoblastic differentiation of chondrocytes by lowering beta-catenin (CTNNB1) signaling and RUNX2 expression (By similarity). Also required for chondrocyte hypertrophy, both indirectly, by keeping the lineage fate of chondrocytes, and directly, by remaining present in upper hypertrophic cells and transactivating COL10A1 along with MEF2C (By similarity). Low lipid levels are the main nutritional determinant for chondrogenic commitment of skeletal progenitor cells: when lipids levels are low, FOXO (FOXO1 and FOXO3) transcription factors promote expression of SOX9, which induces chondrogenic commitment and suppresses fatty acid oxidation (By similarity). Mechanistically, helps, but is not required, to remove epigenetic signatures of transcriptional repression and deposit active promoter and enhancer marks at chondrocyte-specific genes (By similarity). Acts in cooperation with the Hedgehog pathway-dependent GLI (GLI1 and GLI3) transcription factors (By similarity). In addition to cartilage development, also acts as a regulator of proliferation and differentiation in epithelial stem/progenitor cells: involved in the lung epithelium during branching morphogenesis, by balancing proliferation and differentiation and regulating the extracellular matrix (By similarity). Controls epithelial branching during kidney development (By similarity).</text>
</comment>
<comment type="subunit">
    <text evidence="1 8 16">Homodimer; homodimerization is required for activity (By similarity). Interacts (via C-terminus) with ZNF219; forming a complex that binds to the COL2A1 promoter and activates COL2A1 expression (By similarity). Interacts with DDRGK1 (PubMed:28263186). Interacts with EP300/p300 (PubMed:12732631). Interacts with beta-catenin (CTNNB1); inhibiting CTNNB1 activity by competing with the binding sites of TCF/LEF within CTNNB1 (By similarity).</text>
</comment>
<comment type="interaction">
    <interactant intactId="EBI-3920028">
        <id>P48436</id>
    </interactant>
    <interactant intactId="EBI-14022639">
        <id>Q3U108</id>
        <label>Arid5a</label>
    </interactant>
    <organismsDiffer>true</organismsDiffer>
    <experiments>3</experiments>
</comment>
<comment type="interaction">
    <interactant intactId="EBI-3920028">
        <id>P48436</id>
    </interactant>
    <interactant intactId="EBI-397403">
        <id>P62157</id>
        <label>CALM</label>
    </interactant>
    <organismsDiffer>true</organismsDiffer>
    <experiments>7</experiments>
</comment>
<comment type="subcellular location">
    <subcellularLocation>
        <location evidence="2 22">Nucleus</location>
    </subcellularLocation>
</comment>
<comment type="domain">
    <text evidence="17 22">The transactivation domains TAM and TAC (for transactivation domain in the middle and at the C-terminus, respectively) are required to contact transcriptional coactivators and basal transcriptional machinery components and thereby induce gene transactivation.</text>
</comment>
<comment type="domain">
    <text evidence="18">The 9aaTAD motif is a transactivation domain present in a large number of yeast and animal transcription factors.</text>
</comment>
<comment type="domain">
    <text evidence="17">The PQA region (for proline, glutamine and alanine-rich) helps stabilize SOX9 and facilitates transactivation (PubMed:31194875). It lacks intrinsic transactivation capability (PubMed:31194875).</text>
</comment>
<comment type="PTM">
    <text evidence="1">Acetylated; acetylation impairs nuclear localization and ability to transactivate expression of target genes. Deacetylated by SIRT1.</text>
</comment>
<comment type="PTM">
    <text evidence="1">Phosphorylation at Ser-64 and Ser-211 by PKA increases transcriptional activity and may help delay chondrocyte maturation downstream of PTHLH/PTHrP signaling. Phosphorylation at either Ser-64 or Ser-211 is required for sumoylation, but phosphorylation is not dependent on sumoylation. Phosphorylated on tyrosine residues; tyrosine dephosphorylation by PTPN11/SHP2 blocks SOX9 phosphorylation by PKA and subsequent SUMOylation.</text>
</comment>
<comment type="PTM">
    <text evidence="16">Ubiquitinated; ubiquitination leads to proteasomal degradation and is negatively regulated by DDRGK1.</text>
</comment>
<comment type="PTM">
    <text evidence="1">Sumoylated; phosphorylation at either Ser-64 or Ser-211 is required for sumoylation. Sumoylation is induced by BMP signaling pathway.</text>
</comment>
<comment type="disease" evidence="4 5 6 7 9 10 11 12 14 19 20 21 23 24">
    <disease id="DI-01311">
        <name>Campomelic dysplasia</name>
        <acronym>CMD1</acronym>
        <description>A rare, often lethal, osteochondrodysplasia characterized by congenital bowing and angulation of long bones. Other skeletal defects include unusually small scapula, deformed pelvis and spine, and a missing pair of ribs. Craniofacial and ear defects are common. Most patients die soon after birth due to respiratory distress which has been attributed to hypoplasia of the tracheobronchial cartilage and small thoracic cage. Up to two-thirds of affected XY individuals have genital defects or may develop as phenotypic females.</description>
        <dbReference type="MIM" id="114290"/>
    </disease>
    <text>The disease is caused by variants affecting the gene represented in this entry.</text>
</comment>
<comment type="disease" evidence="13">
    <disease id="DI-03053">
        <name>46,XX sex reversal 2</name>
        <acronym>SRXX2</acronym>
        <description>A condition in which male gonads develop in a genetic female (female to male sex reversal).</description>
        <dbReference type="MIM" id="278850"/>
    </disease>
    <text>The disease is caused by variants affecting the gene represented in this entry.</text>
</comment>
<comment type="disease" evidence="15">
    <disease id="DI-04458">
        <name>46,XY sex reversal 10</name>
        <acronym>SRXY10</acronym>
        <description>A disorder of sex development. Affected individuals have a 46,XY karyotype, show gonadal dysgenesis with streak gonads, look like normal females at birth, do not develop secondary sexual characteristics at puberty and do not menstruate.</description>
        <dbReference type="MIM" id="616425"/>
    </disease>
    <text>The disease is caused by variants affecting the gene represented in this entry.</text>
</comment>
<dbReference type="EMBL" id="Z46629">
    <property type="protein sequence ID" value="CAA86598.1"/>
    <property type="molecule type" value="mRNA"/>
</dbReference>
<dbReference type="EMBL" id="S74506">
    <property type="protein sequence ID" value="AAB32870.1"/>
    <property type="molecule type" value="Genomic_DNA"/>
</dbReference>
<dbReference type="EMBL" id="S74504">
    <property type="protein sequence ID" value="AAB32870.1"/>
    <property type="status" value="JOINED"/>
    <property type="molecule type" value="Genomic_DNA"/>
</dbReference>
<dbReference type="EMBL" id="S74505">
    <property type="protein sequence ID" value="AAB32870.1"/>
    <property type="status" value="JOINED"/>
    <property type="molecule type" value="Genomic_DNA"/>
</dbReference>
<dbReference type="EMBL" id="BT006875">
    <property type="protein sequence ID" value="AAP35521.1"/>
    <property type="molecule type" value="mRNA"/>
</dbReference>
<dbReference type="EMBL" id="CH471099">
    <property type="protein sequence ID" value="EAW89102.1"/>
    <property type="molecule type" value="Genomic_DNA"/>
</dbReference>
<dbReference type="EMBL" id="BC007951">
    <property type="protein sequence ID" value="AAH07951.1"/>
    <property type="molecule type" value="mRNA"/>
</dbReference>
<dbReference type="EMBL" id="BC056420">
    <property type="protein sequence ID" value="AAH56420.1"/>
    <property type="molecule type" value="mRNA"/>
</dbReference>
<dbReference type="CCDS" id="CCDS11689.1"/>
<dbReference type="PIR" id="A55204">
    <property type="entry name" value="A55204"/>
</dbReference>
<dbReference type="RefSeq" id="NP_000337.1">
    <property type="nucleotide sequence ID" value="NM_000346.4"/>
</dbReference>
<dbReference type="PDB" id="4EUW">
    <property type="method" value="X-ray"/>
    <property type="resolution" value="2.77 A"/>
    <property type="chains" value="A=98-181"/>
</dbReference>
<dbReference type="PDBsum" id="4EUW"/>
<dbReference type="SMR" id="P48436"/>
<dbReference type="BioGRID" id="112545">
    <property type="interactions" value="94"/>
</dbReference>
<dbReference type="CORUM" id="P48436"/>
<dbReference type="DIP" id="DIP-61319N"/>
<dbReference type="ELM" id="P48436"/>
<dbReference type="FunCoup" id="P48436">
    <property type="interactions" value="1312"/>
</dbReference>
<dbReference type="IntAct" id="P48436">
    <property type="interactions" value="55"/>
</dbReference>
<dbReference type="STRING" id="9606.ENSP00000245479"/>
<dbReference type="ChEMBL" id="CHEMBL4523231"/>
<dbReference type="GlyGen" id="P48436">
    <property type="glycosylation" value="3 sites, 1 O-linked glycan (1 site)"/>
</dbReference>
<dbReference type="iPTMnet" id="P48436"/>
<dbReference type="PhosphoSitePlus" id="P48436"/>
<dbReference type="BioMuta" id="SOX9"/>
<dbReference type="DMDM" id="1351096"/>
<dbReference type="jPOST" id="P48436"/>
<dbReference type="MassIVE" id="P48436"/>
<dbReference type="PaxDb" id="9606-ENSP00000245479"/>
<dbReference type="PeptideAtlas" id="P48436"/>
<dbReference type="ProteomicsDB" id="55889"/>
<dbReference type="Antibodypedia" id="915">
    <property type="antibodies" value="962 antibodies from 42 providers"/>
</dbReference>
<dbReference type="CPTC" id="P48436">
    <property type="antibodies" value="2 antibodies"/>
</dbReference>
<dbReference type="DNASU" id="6662"/>
<dbReference type="Ensembl" id="ENST00000245479.3">
    <property type="protein sequence ID" value="ENSP00000245479.2"/>
    <property type="gene ID" value="ENSG00000125398.8"/>
</dbReference>
<dbReference type="GeneID" id="6662"/>
<dbReference type="KEGG" id="hsa:6662"/>
<dbReference type="MANE-Select" id="ENST00000245479.3">
    <property type="protein sequence ID" value="ENSP00000245479.2"/>
    <property type="RefSeq nucleotide sequence ID" value="NM_000346.4"/>
    <property type="RefSeq protein sequence ID" value="NP_000337.1"/>
</dbReference>
<dbReference type="UCSC" id="uc002jiw.4">
    <property type="organism name" value="human"/>
</dbReference>
<dbReference type="AGR" id="HGNC:11204"/>
<dbReference type="CTD" id="6662"/>
<dbReference type="DisGeNET" id="6662"/>
<dbReference type="GeneCards" id="SOX9"/>
<dbReference type="GeneReviews" id="SOX9"/>
<dbReference type="HGNC" id="HGNC:11204">
    <property type="gene designation" value="SOX9"/>
</dbReference>
<dbReference type="HPA" id="ENSG00000125398">
    <property type="expression patterns" value="Tissue enhanced (salivary)"/>
</dbReference>
<dbReference type="MalaCards" id="SOX9"/>
<dbReference type="MIM" id="114290">
    <property type="type" value="phenotype"/>
</dbReference>
<dbReference type="MIM" id="278850">
    <property type="type" value="phenotype"/>
</dbReference>
<dbReference type="MIM" id="608160">
    <property type="type" value="gene"/>
</dbReference>
<dbReference type="MIM" id="616425">
    <property type="type" value="phenotype"/>
</dbReference>
<dbReference type="neXtProt" id="NX_P48436"/>
<dbReference type="OpenTargets" id="ENSG00000125398"/>
<dbReference type="Orphanet" id="2138">
    <property type="disease" value="46,XX ovotesticular difference of sex development"/>
</dbReference>
<dbReference type="Orphanet" id="393">
    <property type="disease" value="46,XX testicular difference of sex development"/>
</dbReference>
<dbReference type="Orphanet" id="242">
    <property type="disease" value="46,XY complete gonadal dysgenesis"/>
</dbReference>
<dbReference type="Orphanet" id="251510">
    <property type="disease" value="46,XY partial gonadal dysgenesis"/>
</dbReference>
<dbReference type="Orphanet" id="140">
    <property type="disease" value="Campomelic dysplasia"/>
</dbReference>
<dbReference type="Orphanet" id="718">
    <property type="disease" value="Isolated Pierre Robin sequence"/>
</dbReference>
<dbReference type="PharmGKB" id="PA36041"/>
<dbReference type="VEuPathDB" id="HostDB:ENSG00000125398"/>
<dbReference type="eggNOG" id="KOG0527">
    <property type="taxonomic scope" value="Eukaryota"/>
</dbReference>
<dbReference type="GeneTree" id="ENSGT00940000158269"/>
<dbReference type="HOGENOM" id="CLU_031800_0_0_1"/>
<dbReference type="InParanoid" id="P48436"/>
<dbReference type="OMA" id="QSSNSYY"/>
<dbReference type="OrthoDB" id="6247875at2759"/>
<dbReference type="PAN-GO" id="P48436">
    <property type="GO annotations" value="9 GO annotations based on evolutionary models"/>
</dbReference>
<dbReference type="PhylomeDB" id="P48436"/>
<dbReference type="PathwayCommons" id="P48436"/>
<dbReference type="Reactome" id="R-HSA-3769402">
    <property type="pathway name" value="Deactivation of the beta-catenin transactivating complex"/>
</dbReference>
<dbReference type="Reactome" id="R-HSA-8878166">
    <property type="pathway name" value="Transcriptional regulation by RUNX2"/>
</dbReference>
<dbReference type="Reactome" id="R-HSA-9690406">
    <property type="pathway name" value="Transcriptional regulation of testis differentiation"/>
</dbReference>
<dbReference type="Reactome" id="R-HSA-9856649">
    <property type="pathway name" value="Transcriptional and post-translational regulation of MITF-M expression and activity"/>
</dbReference>
<dbReference type="Reactome" id="R-HSA-9925561">
    <property type="pathway name" value="Developmental Lineage of Pancreatic Acinar Cells"/>
</dbReference>
<dbReference type="SignaLink" id="P48436"/>
<dbReference type="SIGNOR" id="P48436"/>
<dbReference type="BioGRID-ORCS" id="6662">
    <property type="hits" value="125 hits in 1193 CRISPR screens"/>
</dbReference>
<dbReference type="CD-CODE" id="1A18FFC4">
    <property type="entry name" value="Paraspeckle"/>
</dbReference>
<dbReference type="ChiTaRS" id="SOX9">
    <property type="organism name" value="human"/>
</dbReference>
<dbReference type="EvolutionaryTrace" id="P48436"/>
<dbReference type="GeneWiki" id="SOX9"/>
<dbReference type="GenomeRNAi" id="6662"/>
<dbReference type="Pharos" id="P48436">
    <property type="development level" value="Tbio"/>
</dbReference>
<dbReference type="PRO" id="PR:P48436"/>
<dbReference type="Proteomes" id="UP000005640">
    <property type="component" value="Chromosome 17"/>
</dbReference>
<dbReference type="RNAct" id="P48436">
    <property type="molecule type" value="protein"/>
</dbReference>
<dbReference type="Bgee" id="ENSG00000125398">
    <property type="expression patterns" value="Expressed in ventricular zone and 193 other cell types or tissues"/>
</dbReference>
<dbReference type="GO" id="GO:0000785">
    <property type="term" value="C:chromatin"/>
    <property type="evidence" value="ECO:0000247"/>
    <property type="project" value="NTNU_SB"/>
</dbReference>
<dbReference type="GO" id="GO:0005654">
    <property type="term" value="C:nucleoplasm"/>
    <property type="evidence" value="ECO:0000314"/>
    <property type="project" value="HPA"/>
</dbReference>
<dbReference type="GO" id="GO:0005634">
    <property type="term" value="C:nucleus"/>
    <property type="evidence" value="ECO:0000314"/>
    <property type="project" value="UniProtKB"/>
</dbReference>
<dbReference type="GO" id="GO:0032991">
    <property type="term" value="C:protein-containing complex"/>
    <property type="evidence" value="ECO:0000314"/>
    <property type="project" value="UniProtKB"/>
</dbReference>
<dbReference type="GO" id="GO:0005667">
    <property type="term" value="C:transcription regulator complex"/>
    <property type="evidence" value="ECO:0007669"/>
    <property type="project" value="Ensembl"/>
</dbReference>
<dbReference type="GO" id="GO:0008013">
    <property type="term" value="F:beta-catenin binding"/>
    <property type="evidence" value="ECO:0007669"/>
    <property type="project" value="Ensembl"/>
</dbReference>
<dbReference type="GO" id="GO:0043425">
    <property type="term" value="F:bHLH transcription factor binding"/>
    <property type="evidence" value="ECO:0007669"/>
    <property type="project" value="Ensembl"/>
</dbReference>
<dbReference type="GO" id="GO:0003682">
    <property type="term" value="F:chromatin binding"/>
    <property type="evidence" value="ECO:0000314"/>
    <property type="project" value="UniProtKB"/>
</dbReference>
<dbReference type="GO" id="GO:0000987">
    <property type="term" value="F:cis-regulatory region sequence-specific DNA binding"/>
    <property type="evidence" value="ECO:0000314"/>
    <property type="project" value="UniProtKB"/>
</dbReference>
<dbReference type="GO" id="GO:0001228">
    <property type="term" value="F:DNA-binding transcription activator activity, RNA polymerase II-specific"/>
    <property type="evidence" value="ECO:0000314"/>
    <property type="project" value="UniProtKB"/>
</dbReference>
<dbReference type="GO" id="GO:0003700">
    <property type="term" value="F:DNA-binding transcription factor activity"/>
    <property type="evidence" value="ECO:0000314"/>
    <property type="project" value="UniProtKB"/>
</dbReference>
<dbReference type="GO" id="GO:0000981">
    <property type="term" value="F:DNA-binding transcription factor activity, RNA polymerase II-specific"/>
    <property type="evidence" value="ECO:0000314"/>
    <property type="project" value="UniProtKB"/>
</dbReference>
<dbReference type="GO" id="GO:0097157">
    <property type="term" value="F:pre-mRNA intronic binding"/>
    <property type="evidence" value="ECO:0007669"/>
    <property type="project" value="Ensembl"/>
</dbReference>
<dbReference type="GO" id="GO:0034236">
    <property type="term" value="F:protein kinase A catalytic subunit binding"/>
    <property type="evidence" value="ECO:0000353"/>
    <property type="project" value="UniProtKB"/>
</dbReference>
<dbReference type="GO" id="GO:0000978">
    <property type="term" value="F:RNA polymerase II cis-regulatory region sequence-specific DNA binding"/>
    <property type="evidence" value="ECO:0000314"/>
    <property type="project" value="UniProtKB"/>
</dbReference>
<dbReference type="GO" id="GO:0043565">
    <property type="term" value="F:sequence-specific DNA binding"/>
    <property type="evidence" value="ECO:0000314"/>
    <property type="project" value="UniProtKB"/>
</dbReference>
<dbReference type="GO" id="GO:1990837">
    <property type="term" value="F:sequence-specific double-stranded DNA binding"/>
    <property type="evidence" value="ECO:0000314"/>
    <property type="project" value="ARUK-UCL"/>
</dbReference>
<dbReference type="GO" id="GO:0097065">
    <property type="term" value="P:anterior head development"/>
    <property type="evidence" value="ECO:0007669"/>
    <property type="project" value="Ensembl"/>
</dbReference>
<dbReference type="GO" id="GO:0003180">
    <property type="term" value="P:aortic valve morphogenesis"/>
    <property type="evidence" value="ECO:0000314"/>
    <property type="project" value="BHF-UCL"/>
</dbReference>
<dbReference type="GO" id="GO:0060018">
    <property type="term" value="P:astrocyte fate commitment"/>
    <property type="evidence" value="ECO:0007669"/>
    <property type="project" value="Ensembl"/>
</dbReference>
<dbReference type="GO" id="GO:0030282">
    <property type="term" value="P:bone mineralization"/>
    <property type="evidence" value="ECO:0007669"/>
    <property type="project" value="Ensembl"/>
</dbReference>
<dbReference type="GO" id="GO:0001658">
    <property type="term" value="P:branching involved in ureteric bud morphogenesis"/>
    <property type="evidence" value="ECO:0007669"/>
    <property type="project" value="Ensembl"/>
</dbReference>
<dbReference type="GO" id="GO:0060532">
    <property type="term" value="P:bronchus cartilage development"/>
    <property type="evidence" value="ECO:0007669"/>
    <property type="project" value="Ensembl"/>
</dbReference>
<dbReference type="GO" id="GO:0060070">
    <property type="term" value="P:canonical Wnt signaling pathway"/>
    <property type="evidence" value="ECO:0007669"/>
    <property type="project" value="Ensembl"/>
</dbReference>
<dbReference type="GO" id="GO:0001502">
    <property type="term" value="P:cartilage condensation"/>
    <property type="evidence" value="ECO:0000250"/>
    <property type="project" value="UniProtKB"/>
</dbReference>
<dbReference type="GO" id="GO:0051216">
    <property type="term" value="P:cartilage development"/>
    <property type="evidence" value="ECO:0000250"/>
    <property type="project" value="UniProtKB"/>
</dbReference>
<dbReference type="GO" id="GO:0001708">
    <property type="term" value="P:cell fate specification"/>
    <property type="evidence" value="ECO:0000250"/>
    <property type="project" value="UniProtKB"/>
</dbReference>
<dbReference type="GO" id="GO:0061323">
    <property type="term" value="P:cell proliferation involved in heart morphogenesis"/>
    <property type="evidence" value="ECO:0007669"/>
    <property type="project" value="Ensembl"/>
</dbReference>
<dbReference type="GO" id="GO:0098609">
    <property type="term" value="P:cell-cell adhesion"/>
    <property type="evidence" value="ECO:0007669"/>
    <property type="project" value="Ensembl"/>
</dbReference>
<dbReference type="GO" id="GO:0071773">
    <property type="term" value="P:cellular response to BMP stimulus"/>
    <property type="evidence" value="ECO:0000250"/>
    <property type="project" value="UniProtKB"/>
</dbReference>
<dbReference type="GO" id="GO:0071364">
    <property type="term" value="P:cellular response to epidermal growth factor stimulus"/>
    <property type="evidence" value="ECO:0000250"/>
    <property type="project" value="UniProtKB"/>
</dbReference>
<dbReference type="GO" id="GO:0071504">
    <property type="term" value="P:cellular response to heparin"/>
    <property type="evidence" value="ECO:0000250"/>
    <property type="project" value="UniProtKB"/>
</dbReference>
<dbReference type="GO" id="GO:0071347">
    <property type="term" value="P:cellular response to interleukin-1"/>
    <property type="evidence" value="ECO:0000270"/>
    <property type="project" value="UniProtKB"/>
</dbReference>
<dbReference type="GO" id="GO:0071260">
    <property type="term" value="P:cellular response to mechanical stimulus"/>
    <property type="evidence" value="ECO:0000250"/>
    <property type="project" value="UniProtKB"/>
</dbReference>
<dbReference type="GO" id="GO:0071300">
    <property type="term" value="P:cellular response to retinoic acid"/>
    <property type="evidence" value="ECO:0000270"/>
    <property type="project" value="UniProtKB"/>
</dbReference>
<dbReference type="GO" id="GO:0071560">
    <property type="term" value="P:cellular response to transforming growth factor beta stimulus"/>
    <property type="evidence" value="ECO:0000314"/>
    <property type="project" value="UniProtKB"/>
</dbReference>
<dbReference type="GO" id="GO:0002062">
    <property type="term" value="P:chondrocyte differentiation"/>
    <property type="evidence" value="ECO:0000250"/>
    <property type="project" value="UniProtKB"/>
</dbReference>
<dbReference type="GO" id="GO:0003413">
    <property type="term" value="P:chondrocyte differentiation involved in endochondral bone morphogenesis"/>
    <property type="evidence" value="ECO:0000315"/>
    <property type="project" value="UniProtKB"/>
</dbReference>
<dbReference type="GO" id="GO:0003415">
    <property type="term" value="P:chondrocyte hypertrophy"/>
    <property type="evidence" value="ECO:0000250"/>
    <property type="project" value="UniProtKB"/>
</dbReference>
<dbReference type="GO" id="GO:0006338">
    <property type="term" value="P:chromatin remodeling"/>
    <property type="evidence" value="ECO:0000314"/>
    <property type="project" value="UniProtKB"/>
</dbReference>
<dbReference type="GO" id="GO:0090103">
    <property type="term" value="P:cochlea morphogenesis"/>
    <property type="evidence" value="ECO:0000250"/>
    <property type="project" value="UniProtKB"/>
</dbReference>
<dbReference type="GO" id="GO:0007010">
    <property type="term" value="P:cytoskeleton organization"/>
    <property type="evidence" value="ECO:0007669"/>
    <property type="project" value="Ensembl"/>
</dbReference>
<dbReference type="GO" id="GO:0003203">
    <property type="term" value="P:endocardial cushion morphogenesis"/>
    <property type="evidence" value="ECO:0000250"/>
    <property type="project" value="UniProtKB"/>
</dbReference>
<dbReference type="GO" id="GO:0031018">
    <property type="term" value="P:endocrine pancreas development"/>
    <property type="evidence" value="ECO:0007669"/>
    <property type="project" value="Ensembl"/>
</dbReference>
<dbReference type="GO" id="GO:0007173">
    <property type="term" value="P:epidermal growth factor receptor signaling pathway"/>
    <property type="evidence" value="ECO:0000250"/>
    <property type="project" value="UniProtKB"/>
</dbReference>
<dbReference type="GO" id="GO:0060517">
    <property type="term" value="P:epithelial cell proliferation involved in prostatic bud elongation"/>
    <property type="evidence" value="ECO:0000250"/>
    <property type="project" value="UniProtKB"/>
</dbReference>
<dbReference type="GO" id="GO:0001837">
    <property type="term" value="P:epithelial to mesenchymal transition"/>
    <property type="evidence" value="ECO:0000250"/>
    <property type="project" value="UniProtKB"/>
</dbReference>
<dbReference type="GO" id="GO:0060441">
    <property type="term" value="P:epithelial tube branching involved in lung morphogenesis"/>
    <property type="evidence" value="ECO:0007669"/>
    <property type="project" value="Ensembl"/>
</dbReference>
<dbReference type="GO" id="GO:0070371">
    <property type="term" value="P:ERK1 and ERK2 cascade"/>
    <property type="evidence" value="ECO:0000250"/>
    <property type="project" value="UniProtKB"/>
</dbReference>
<dbReference type="GO" id="GO:0085029">
    <property type="term" value="P:extracellular matrix assembly"/>
    <property type="evidence" value="ECO:0007669"/>
    <property type="project" value="Ensembl"/>
</dbReference>
<dbReference type="GO" id="GO:0002067">
    <property type="term" value="P:glandular epithelial cell differentiation"/>
    <property type="evidence" value="ECO:0007669"/>
    <property type="project" value="Ensembl"/>
</dbReference>
<dbReference type="GO" id="GO:0021780">
    <property type="term" value="P:glial cell fate specification"/>
    <property type="evidence" value="ECO:0007669"/>
    <property type="project" value="Ensembl"/>
</dbReference>
<dbReference type="GO" id="GO:0003430">
    <property type="term" value="P:growth plate cartilage chondrocyte growth"/>
    <property type="evidence" value="ECO:0000250"/>
    <property type="project" value="UniProtKB"/>
</dbReference>
<dbReference type="GO" id="GO:0001942">
    <property type="term" value="P:hair follicle development"/>
    <property type="evidence" value="ECO:0000250"/>
    <property type="project" value="UniProtKB"/>
</dbReference>
<dbReference type="GO" id="GO:0070384">
    <property type="term" value="P:Harderian gland development"/>
    <property type="evidence" value="ECO:0007669"/>
    <property type="project" value="Ensembl"/>
</dbReference>
<dbReference type="GO" id="GO:0007507">
    <property type="term" value="P:heart development"/>
    <property type="evidence" value="ECO:0000318"/>
    <property type="project" value="GO_Central"/>
</dbReference>
<dbReference type="GO" id="GO:0003170">
    <property type="term" value="P:heart valve development"/>
    <property type="evidence" value="ECO:0000250"/>
    <property type="project" value="UniProtKB"/>
</dbReference>
<dbReference type="GO" id="GO:0003188">
    <property type="term" value="P:heart valve formation"/>
    <property type="evidence" value="ECO:0007669"/>
    <property type="project" value="Ensembl"/>
</dbReference>
<dbReference type="GO" id="GO:0003179">
    <property type="term" value="P:heart valve morphogenesis"/>
    <property type="evidence" value="ECO:0000250"/>
    <property type="project" value="UniProtKB"/>
</dbReference>
<dbReference type="GO" id="GO:0060575">
    <property type="term" value="P:intestinal epithelial cell differentiation"/>
    <property type="evidence" value="ECO:0007669"/>
    <property type="project" value="Ensembl"/>
</dbReference>
<dbReference type="GO" id="GO:0060729">
    <property type="term" value="P:intestinal epithelial structure maintenance"/>
    <property type="evidence" value="ECO:0000250"/>
    <property type="project" value="UniProtKB"/>
</dbReference>
<dbReference type="GO" id="GO:0035622">
    <property type="term" value="P:intrahepatic bile duct development"/>
    <property type="evidence" value="ECO:0007669"/>
    <property type="project" value="Ensembl"/>
</dbReference>
<dbReference type="GO" id="GO:0032808">
    <property type="term" value="P:lacrimal gland development"/>
    <property type="evidence" value="ECO:0007669"/>
    <property type="project" value="Ensembl"/>
</dbReference>
<dbReference type="GO" id="GO:0060174">
    <property type="term" value="P:limb bud formation"/>
    <property type="evidence" value="ECO:0007669"/>
    <property type="project" value="Ensembl"/>
</dbReference>
<dbReference type="GO" id="GO:0061145">
    <property type="term" value="P:lung smooth muscle development"/>
    <property type="evidence" value="ECO:0007669"/>
    <property type="project" value="Ensembl"/>
</dbReference>
<dbReference type="GO" id="GO:0019100">
    <property type="term" value="P:male germ-line sex determination"/>
    <property type="evidence" value="ECO:0000250"/>
    <property type="project" value="UniProtKB"/>
</dbReference>
<dbReference type="GO" id="GO:0008584">
    <property type="term" value="P:male gonad development"/>
    <property type="evidence" value="ECO:0000315"/>
    <property type="project" value="UniProtKB"/>
</dbReference>
<dbReference type="GO" id="GO:0030879">
    <property type="term" value="P:mammary gland development"/>
    <property type="evidence" value="ECO:0007669"/>
    <property type="project" value="Ensembl"/>
</dbReference>
<dbReference type="GO" id="GO:0097152">
    <property type="term" value="P:mesenchymal cell apoptotic process"/>
    <property type="evidence" value="ECO:0007669"/>
    <property type="project" value="Ensembl"/>
</dbReference>
<dbReference type="GO" id="GO:0010463">
    <property type="term" value="P:mesenchymal cell proliferation"/>
    <property type="evidence" value="ECO:0007669"/>
    <property type="project" value="Ensembl"/>
</dbReference>
<dbReference type="GO" id="GO:0072289">
    <property type="term" value="P:metanephric nephron tubule formation"/>
    <property type="evidence" value="ECO:0000250"/>
    <property type="project" value="UniProtKB"/>
</dbReference>
<dbReference type="GO" id="GO:0061138">
    <property type="term" value="P:morphogenesis of a branching epithelium"/>
    <property type="evidence" value="ECO:0000250"/>
    <property type="project" value="UniProtKB"/>
</dbReference>
<dbReference type="GO" id="GO:0002009">
    <property type="term" value="P:morphogenesis of an epithelium"/>
    <property type="evidence" value="ECO:0000318"/>
    <property type="project" value="GO_Central"/>
</dbReference>
<dbReference type="GO" id="GO:0043066">
    <property type="term" value="P:negative regulation of apoptotic process"/>
    <property type="evidence" value="ECO:0000250"/>
    <property type="project" value="UniProtKB"/>
</dbReference>
<dbReference type="GO" id="GO:1904864">
    <property type="term" value="P:negative regulation of beta-catenin-TCF complex assembly"/>
    <property type="evidence" value="ECO:0007669"/>
    <property type="project" value="Ensembl"/>
</dbReference>
<dbReference type="GO" id="GO:0070168">
    <property type="term" value="P:negative regulation of biomineral tissue development"/>
    <property type="evidence" value="ECO:0000314"/>
    <property type="project" value="BHF-UCL"/>
</dbReference>
<dbReference type="GO" id="GO:0030502">
    <property type="term" value="P:negative regulation of bone mineralization"/>
    <property type="evidence" value="ECO:0007669"/>
    <property type="project" value="Ensembl"/>
</dbReference>
<dbReference type="GO" id="GO:0090090">
    <property type="term" value="P:negative regulation of canonical Wnt signaling pathway"/>
    <property type="evidence" value="ECO:0000250"/>
    <property type="project" value="UniProtKB"/>
</dbReference>
<dbReference type="GO" id="GO:0032331">
    <property type="term" value="P:negative regulation of chondrocyte differentiation"/>
    <property type="evidence" value="ECO:0000250"/>
    <property type="project" value="UniProtKB"/>
</dbReference>
<dbReference type="GO" id="GO:0045892">
    <property type="term" value="P:negative regulation of DNA-templated transcription"/>
    <property type="evidence" value="ECO:0000315"/>
    <property type="project" value="UniProtKB"/>
</dbReference>
<dbReference type="GO" id="GO:0030857">
    <property type="term" value="P:negative regulation of epithelial cell differentiation"/>
    <property type="evidence" value="ECO:0007669"/>
    <property type="project" value="Ensembl"/>
</dbReference>
<dbReference type="GO" id="GO:0050680">
    <property type="term" value="P:negative regulation of epithelial cell proliferation"/>
    <property type="evidence" value="ECO:0000250"/>
    <property type="project" value="UniProtKB"/>
</dbReference>
<dbReference type="GO" id="GO:0046322">
    <property type="term" value="P:negative regulation of fatty acid oxidation"/>
    <property type="evidence" value="ECO:0000250"/>
    <property type="project" value="UniProtKB"/>
</dbReference>
<dbReference type="GO" id="GO:0010629">
    <property type="term" value="P:negative regulation of gene expression"/>
    <property type="evidence" value="ECO:0007669"/>
    <property type="project" value="Ensembl"/>
</dbReference>
<dbReference type="GO" id="GO:0002683">
    <property type="term" value="P:negative regulation of immune system process"/>
    <property type="evidence" value="ECO:0000250"/>
    <property type="project" value="UniProtKB"/>
</dbReference>
<dbReference type="GO" id="GO:2001054">
    <property type="term" value="P:negative regulation of mesenchymal cell apoptotic process"/>
    <property type="evidence" value="ECO:0007669"/>
    <property type="project" value="Ensembl"/>
</dbReference>
<dbReference type="GO" id="GO:1902894">
    <property type="term" value="P:negative regulation of miRNA transcription"/>
    <property type="evidence" value="ECO:0000314"/>
    <property type="project" value="BHF-UCL"/>
</dbReference>
<dbReference type="GO" id="GO:0045662">
    <property type="term" value="P:negative regulation of myoblast differentiation"/>
    <property type="evidence" value="ECO:0000250"/>
    <property type="project" value="UniProtKB"/>
</dbReference>
<dbReference type="GO" id="GO:0030279">
    <property type="term" value="P:negative regulation of ossification"/>
    <property type="evidence" value="ECO:0000314"/>
    <property type="project" value="CACAO"/>
</dbReference>
<dbReference type="GO" id="GO:0045668">
    <property type="term" value="P:negative regulation of osteoblast differentiation"/>
    <property type="evidence" value="ECO:0000250"/>
    <property type="project" value="UniProtKB"/>
</dbReference>
<dbReference type="GO" id="GO:0046533">
    <property type="term" value="P:negative regulation of photoreceptor cell differentiation"/>
    <property type="evidence" value="ECO:0000250"/>
    <property type="project" value="UniProtKB"/>
</dbReference>
<dbReference type="GO" id="GO:0000122">
    <property type="term" value="P:negative regulation of transcription by RNA polymerase II"/>
    <property type="evidence" value="ECO:0000314"/>
    <property type="project" value="CACAO"/>
</dbReference>
<dbReference type="GO" id="GO:0014032">
    <property type="term" value="P:neural crest cell development"/>
    <property type="evidence" value="ECO:0007669"/>
    <property type="project" value="Ensembl"/>
</dbReference>
<dbReference type="GO" id="GO:0014036">
    <property type="term" value="P:neural crest cell fate specification"/>
    <property type="evidence" value="ECO:0000250"/>
    <property type="project" value="UniProtKB"/>
</dbReference>
<dbReference type="GO" id="GO:0048665">
    <property type="term" value="P:neuron fate specification"/>
    <property type="evidence" value="ECO:0007669"/>
    <property type="project" value="Ensembl"/>
</dbReference>
<dbReference type="GO" id="GO:0007219">
    <property type="term" value="P:Notch signaling pathway"/>
    <property type="evidence" value="ECO:0007669"/>
    <property type="project" value="Ensembl"/>
</dbReference>
<dbReference type="GO" id="GO:0030903">
    <property type="term" value="P:notochord development"/>
    <property type="evidence" value="ECO:0007669"/>
    <property type="project" value="Ensembl"/>
</dbReference>
<dbReference type="GO" id="GO:0006334">
    <property type="term" value="P:nucleosome assembly"/>
    <property type="evidence" value="ECO:0000314"/>
    <property type="project" value="UniProtKB"/>
</dbReference>
<dbReference type="GO" id="GO:0048709">
    <property type="term" value="P:oligodendrocyte differentiation"/>
    <property type="evidence" value="ECO:0000318"/>
    <property type="project" value="GO_Central"/>
</dbReference>
<dbReference type="GO" id="GO:0030916">
    <property type="term" value="P:otic vesicle formation"/>
    <property type="evidence" value="ECO:0000250"/>
    <property type="project" value="UniProtKB"/>
</dbReference>
<dbReference type="GO" id="GO:0090190">
    <property type="term" value="P:positive regulation of branching involved in ureteric bud morphogenesis"/>
    <property type="evidence" value="ECO:0000250"/>
    <property type="project" value="UniProtKB"/>
</dbReference>
<dbReference type="GO" id="GO:0061036">
    <property type="term" value="P:positive regulation of cartilage development"/>
    <property type="evidence" value="ECO:0000314"/>
    <property type="project" value="UniProtKB"/>
</dbReference>
<dbReference type="GO" id="GO:0008284">
    <property type="term" value="P:positive regulation of cell population proliferation"/>
    <property type="evidence" value="ECO:0000315"/>
    <property type="project" value="UniProtKB"/>
</dbReference>
<dbReference type="GO" id="GO:2000138">
    <property type="term" value="P:positive regulation of cell proliferation involved in heart morphogenesis"/>
    <property type="evidence" value="ECO:0007669"/>
    <property type="project" value="Ensembl"/>
</dbReference>
<dbReference type="GO" id="GO:0032332">
    <property type="term" value="P:positive regulation of chondrocyte differentiation"/>
    <property type="evidence" value="ECO:0000314"/>
    <property type="project" value="UniProtKB"/>
</dbReference>
<dbReference type="GO" id="GO:1902732">
    <property type="term" value="P:positive regulation of chondrocyte proliferation"/>
    <property type="evidence" value="ECO:0000314"/>
    <property type="project" value="CACAO"/>
</dbReference>
<dbReference type="GO" id="GO:0045893">
    <property type="term" value="P:positive regulation of DNA-templated transcription"/>
    <property type="evidence" value="ECO:0000314"/>
    <property type="project" value="UniProtKB"/>
</dbReference>
<dbReference type="GO" id="GO:0030858">
    <property type="term" value="P:positive regulation of epithelial cell differentiation"/>
    <property type="evidence" value="ECO:0000250"/>
    <property type="project" value="UniProtKB"/>
</dbReference>
<dbReference type="GO" id="GO:0010634">
    <property type="term" value="P:positive regulation of epithelial cell migration"/>
    <property type="evidence" value="ECO:0000315"/>
    <property type="project" value="UniProtKB"/>
</dbReference>
<dbReference type="GO" id="GO:0050679">
    <property type="term" value="P:positive regulation of epithelial cell proliferation"/>
    <property type="evidence" value="ECO:0000270"/>
    <property type="project" value="UniProtKB"/>
</dbReference>
<dbReference type="GO" id="GO:1901203">
    <property type="term" value="P:positive regulation of extracellular matrix assembly"/>
    <property type="evidence" value="ECO:0007669"/>
    <property type="project" value="Ensembl"/>
</dbReference>
<dbReference type="GO" id="GO:0010628">
    <property type="term" value="P:positive regulation of gene expression"/>
    <property type="evidence" value="ECO:0000314"/>
    <property type="project" value="UniProtKB"/>
</dbReference>
<dbReference type="GO" id="GO:0090184">
    <property type="term" value="P:positive regulation of kidney development"/>
    <property type="evidence" value="ECO:0000250"/>
    <property type="project" value="UniProtKB"/>
</dbReference>
<dbReference type="GO" id="GO:2000020">
    <property type="term" value="P:positive regulation of male gonad development"/>
    <property type="evidence" value="ECO:0000314"/>
    <property type="project" value="UniProtKB"/>
</dbReference>
<dbReference type="GO" id="GO:0002053">
    <property type="term" value="P:positive regulation of mesenchymal cell proliferation"/>
    <property type="evidence" value="ECO:0000250"/>
    <property type="project" value="UniProtKB"/>
</dbReference>
<dbReference type="GO" id="GO:2000741">
    <property type="term" value="P:positive regulation of mesenchymal stem cell differentiation"/>
    <property type="evidence" value="ECO:0000314"/>
    <property type="project" value="UniProtKB"/>
</dbReference>
<dbReference type="GO" id="GO:0045732">
    <property type="term" value="P:positive regulation of protein catabolic process"/>
    <property type="evidence" value="ECO:0007669"/>
    <property type="project" value="Ensembl"/>
</dbReference>
<dbReference type="GO" id="GO:2000648">
    <property type="term" value="P:positive regulation of stem cell proliferation"/>
    <property type="evidence" value="ECO:0007669"/>
    <property type="project" value="Ensembl"/>
</dbReference>
<dbReference type="GO" id="GO:0045944">
    <property type="term" value="P:positive regulation of transcription by RNA polymerase II"/>
    <property type="evidence" value="ECO:0000314"/>
    <property type="project" value="UniProtKB"/>
</dbReference>
<dbReference type="GO" id="GO:0030850">
    <property type="term" value="P:prostate gland development"/>
    <property type="evidence" value="ECO:0000270"/>
    <property type="project" value="UniProtKB"/>
</dbReference>
<dbReference type="GO" id="GO:0034504">
    <property type="term" value="P:protein localization to nucleus"/>
    <property type="evidence" value="ECO:0007669"/>
    <property type="project" value="Ensembl"/>
</dbReference>
<dbReference type="GO" id="GO:0065003">
    <property type="term" value="P:protein-containing complex assembly"/>
    <property type="evidence" value="ECO:0000314"/>
    <property type="project" value="UniProtKB"/>
</dbReference>
<dbReference type="GO" id="GO:0042981">
    <property type="term" value="P:regulation of apoptotic process"/>
    <property type="evidence" value="ECO:0000250"/>
    <property type="project" value="UniProtKB"/>
</dbReference>
<dbReference type="GO" id="GO:0061046">
    <property type="term" value="P:regulation of branching involved in lung morphogenesis"/>
    <property type="evidence" value="ECO:0007669"/>
    <property type="project" value="Ensembl"/>
</dbReference>
<dbReference type="GO" id="GO:0030155">
    <property type="term" value="P:regulation of cell adhesion"/>
    <property type="evidence" value="ECO:0007669"/>
    <property type="project" value="Ensembl"/>
</dbReference>
<dbReference type="GO" id="GO:0010564">
    <property type="term" value="P:regulation of cell cycle process"/>
    <property type="evidence" value="ECO:0000315"/>
    <property type="project" value="UniProtKB"/>
</dbReference>
<dbReference type="GO" id="GO:0042127">
    <property type="term" value="P:regulation of cell population proliferation"/>
    <property type="evidence" value="ECO:0000250"/>
    <property type="project" value="UniProtKB"/>
</dbReference>
<dbReference type="GO" id="GO:0060784">
    <property type="term" value="P:regulation of cell proliferation involved in tissue homeostasis"/>
    <property type="evidence" value="ECO:0000250"/>
    <property type="project" value="UniProtKB"/>
</dbReference>
<dbReference type="GO" id="GO:2000794">
    <property type="term" value="P:regulation of epithelial cell proliferation involved in lung morphogenesis"/>
    <property type="evidence" value="ECO:0007669"/>
    <property type="project" value="Ensembl"/>
</dbReference>
<dbReference type="GO" id="GO:0072034">
    <property type="term" value="P:renal vesicle induction"/>
    <property type="evidence" value="ECO:0000250"/>
    <property type="project" value="UniProtKB"/>
</dbReference>
<dbReference type="GO" id="GO:0070542">
    <property type="term" value="P:response to fatty acid"/>
    <property type="evidence" value="ECO:0000250"/>
    <property type="project" value="UniProtKB"/>
</dbReference>
<dbReference type="GO" id="GO:0060041">
    <property type="term" value="P:retina development in camera-type eye"/>
    <property type="evidence" value="ECO:0000250"/>
    <property type="project" value="UniProtKB"/>
</dbReference>
<dbReference type="GO" id="GO:0060221">
    <property type="term" value="P:retinal rod cell differentiation"/>
    <property type="evidence" value="ECO:0000250"/>
    <property type="project" value="UniProtKB"/>
</dbReference>
<dbReference type="GO" id="GO:0060009">
    <property type="term" value="P:Sertoli cell development"/>
    <property type="evidence" value="ECO:0007669"/>
    <property type="project" value="Ensembl"/>
</dbReference>
<dbReference type="GO" id="GO:0060008">
    <property type="term" value="P:Sertoli cell differentiation"/>
    <property type="evidence" value="ECO:0000250"/>
    <property type="project" value="UniProtKB"/>
</dbReference>
<dbReference type="GO" id="GO:0007165">
    <property type="term" value="P:signal transduction"/>
    <property type="evidence" value="ECO:0000250"/>
    <property type="project" value="UniProtKB"/>
</dbReference>
<dbReference type="GO" id="GO:0001501">
    <property type="term" value="P:skeletal system development"/>
    <property type="evidence" value="ECO:0000315"/>
    <property type="project" value="UniProtKB"/>
</dbReference>
<dbReference type="GO" id="GO:0035019">
    <property type="term" value="P:somatic stem cell population maintenance"/>
    <property type="evidence" value="ECO:0000250"/>
    <property type="project" value="UniProtKB"/>
</dbReference>
<dbReference type="GO" id="GO:0007283">
    <property type="term" value="P:spermatogenesis"/>
    <property type="evidence" value="ECO:0000250"/>
    <property type="project" value="UniProtKB"/>
</dbReference>
<dbReference type="GO" id="GO:0072089">
    <property type="term" value="P:stem cell proliferation"/>
    <property type="evidence" value="ECO:0007669"/>
    <property type="project" value="Ensembl"/>
</dbReference>
<dbReference type="GO" id="GO:0001894">
    <property type="term" value="P:tissue homeostasis"/>
    <property type="evidence" value="ECO:0000250"/>
    <property type="project" value="UniProtKB"/>
</dbReference>
<dbReference type="GO" id="GO:0060534">
    <property type="term" value="P:trachea cartilage development"/>
    <property type="evidence" value="ECO:0007669"/>
    <property type="project" value="Ensembl"/>
</dbReference>
<dbReference type="GO" id="GO:0006366">
    <property type="term" value="P:transcription by RNA polymerase II"/>
    <property type="evidence" value="ECO:0007669"/>
    <property type="project" value="Ensembl"/>
</dbReference>
<dbReference type="GO" id="GO:0060509">
    <property type="term" value="P:type I pneumocyte differentiation"/>
    <property type="evidence" value="ECO:0007669"/>
    <property type="project" value="Ensembl"/>
</dbReference>
<dbReference type="GO" id="GO:0072197">
    <property type="term" value="P:ureter morphogenesis"/>
    <property type="evidence" value="ECO:0007669"/>
    <property type="project" value="Ensembl"/>
</dbReference>
<dbReference type="GO" id="GO:0072193">
    <property type="term" value="P:ureter smooth muscle cell differentiation"/>
    <property type="evidence" value="ECO:0007669"/>
    <property type="project" value="Ensembl"/>
</dbReference>
<dbReference type="GO" id="GO:0072190">
    <property type="term" value="P:ureter urothelium development"/>
    <property type="evidence" value="ECO:0007669"/>
    <property type="project" value="Ensembl"/>
</dbReference>
<dbReference type="CDD" id="cd22031">
    <property type="entry name" value="HMG-box_SoxE"/>
    <property type="match status" value="1"/>
</dbReference>
<dbReference type="FunFam" id="1.10.30.10:FF:000004">
    <property type="entry name" value="Transcription factor SOX-10"/>
    <property type="match status" value="1"/>
</dbReference>
<dbReference type="Gene3D" id="1.10.30.10">
    <property type="entry name" value="High mobility group box domain"/>
    <property type="match status" value="1"/>
</dbReference>
<dbReference type="InterPro" id="IPR009071">
    <property type="entry name" value="HMG_box_dom"/>
</dbReference>
<dbReference type="InterPro" id="IPR036910">
    <property type="entry name" value="HMG_box_dom_sf"/>
</dbReference>
<dbReference type="InterPro" id="IPR022151">
    <property type="entry name" value="Sox_N"/>
</dbReference>
<dbReference type="InterPro" id="IPR050917">
    <property type="entry name" value="SOX_TF"/>
</dbReference>
<dbReference type="PANTHER" id="PTHR45803">
    <property type="entry name" value="SOX100B"/>
    <property type="match status" value="1"/>
</dbReference>
<dbReference type="PANTHER" id="PTHR45803:SF1">
    <property type="entry name" value="TRANSCRIPTION FACTOR SOX-9"/>
    <property type="match status" value="1"/>
</dbReference>
<dbReference type="Pfam" id="PF00505">
    <property type="entry name" value="HMG_box"/>
    <property type="match status" value="1"/>
</dbReference>
<dbReference type="Pfam" id="PF12444">
    <property type="entry name" value="Sox_N"/>
    <property type="match status" value="1"/>
</dbReference>
<dbReference type="SMART" id="SM00398">
    <property type="entry name" value="HMG"/>
    <property type="match status" value="1"/>
</dbReference>
<dbReference type="SUPFAM" id="SSF47095">
    <property type="entry name" value="HMG-box"/>
    <property type="match status" value="1"/>
</dbReference>
<dbReference type="PROSITE" id="PS50118">
    <property type="entry name" value="HMG_BOX_2"/>
    <property type="match status" value="1"/>
</dbReference>
<gene>
    <name evidence="25 28" type="primary">SOX9</name>
</gene>
<reference key="1">
    <citation type="journal article" date="1994" name="Nature">
        <title>Campomelic dysplasia and autosomal sex reversal caused by mutations in an SRY-related gene.</title>
        <authorList>
            <person name="Foster J.W."/>
            <person name="Dominguez-Steglich M.A."/>
            <person name="Guioli S."/>
            <person name="Kowk G."/>
            <person name="Weller P.A."/>
            <person name="Stevanovic M."/>
            <person name="Weissenbach J."/>
            <person name="Mansour S."/>
            <person name="Young I.D."/>
            <person name="Goodfellow P.N."/>
            <person name="Schafer A.J."/>
        </authorList>
    </citation>
    <scope>NUCLEOTIDE SEQUENCE [MRNA]</scope>
    <scope>INVOLVEMENT IN CMD1</scope>
    <source>
        <tissue>Testis</tissue>
    </source>
</reference>
<reference key="2">
    <citation type="journal article" date="1994" name="Cell">
        <title>Autosomal sex reversal and campomelic dysplasia are caused by mutations in and around the SRY-related gene SOX9.</title>
        <authorList>
            <person name="Wagner T."/>
            <person name="Wirth J."/>
            <person name="Meyer J."/>
            <person name="Zabel B."/>
            <person name="Held M."/>
            <person name="Zimmer J."/>
            <person name="Pasantes J."/>
            <person name="Bricarelli F.D."/>
            <person name="Keutel J."/>
            <person name="Hustert E."/>
            <person name="Wolf U."/>
            <person name="Tommerup N."/>
            <person name="Schempp W."/>
            <person name="Scherer G."/>
        </authorList>
    </citation>
    <scope>NUCLEOTIDE SEQUENCE [GENOMIC DNA]</scope>
    <scope>INVOLVEMENT IN CMD1</scope>
    <scope>VARIANT CMD1 440-TYR--PRO-509 DEL</scope>
</reference>
<reference key="3">
    <citation type="submission" date="2003-05" db="EMBL/GenBank/DDBJ databases">
        <title>Cloning of human full-length CDSs in BD Creator(TM) system donor vector.</title>
        <authorList>
            <person name="Kalnine N."/>
            <person name="Chen X."/>
            <person name="Rolfs A."/>
            <person name="Halleck A."/>
            <person name="Hines L."/>
            <person name="Eisenstein S."/>
            <person name="Koundinya M."/>
            <person name="Raphael J."/>
            <person name="Moreira D."/>
            <person name="Kelley T."/>
            <person name="LaBaer J."/>
            <person name="Lin Y."/>
            <person name="Phelan M."/>
            <person name="Farmer A."/>
        </authorList>
    </citation>
    <scope>NUCLEOTIDE SEQUENCE [LARGE SCALE MRNA]</scope>
</reference>
<reference key="4">
    <citation type="submission" date="2005-07" db="EMBL/GenBank/DDBJ databases">
        <authorList>
            <person name="Mural R.J."/>
            <person name="Istrail S."/>
            <person name="Sutton G.G."/>
            <person name="Florea L."/>
            <person name="Halpern A.L."/>
            <person name="Mobarry C.M."/>
            <person name="Lippert R."/>
            <person name="Walenz B."/>
            <person name="Shatkay H."/>
            <person name="Dew I."/>
            <person name="Miller J.R."/>
            <person name="Flanigan M.J."/>
            <person name="Edwards N.J."/>
            <person name="Bolanos R."/>
            <person name="Fasulo D."/>
            <person name="Halldorsson B.V."/>
            <person name="Hannenhalli S."/>
            <person name="Turner R."/>
            <person name="Yooseph S."/>
            <person name="Lu F."/>
            <person name="Nusskern D.R."/>
            <person name="Shue B.C."/>
            <person name="Zheng X.H."/>
            <person name="Zhong F."/>
            <person name="Delcher A.L."/>
            <person name="Huson D.H."/>
            <person name="Kravitz S.A."/>
            <person name="Mouchard L."/>
            <person name="Reinert K."/>
            <person name="Remington K.A."/>
            <person name="Clark A.G."/>
            <person name="Waterman M.S."/>
            <person name="Eichler E.E."/>
            <person name="Adams M.D."/>
            <person name="Hunkapiller M.W."/>
            <person name="Myers E.W."/>
            <person name="Venter J.C."/>
        </authorList>
    </citation>
    <scope>NUCLEOTIDE SEQUENCE [LARGE SCALE GENOMIC DNA]</scope>
</reference>
<reference key="5">
    <citation type="journal article" date="2004" name="Genome Res.">
        <title>The status, quality, and expansion of the NIH full-length cDNA project: the Mammalian Gene Collection (MGC).</title>
        <authorList>
            <consortium name="The MGC Project Team"/>
        </authorList>
    </citation>
    <scope>NUCLEOTIDE SEQUENCE [LARGE SCALE MRNA]</scope>
    <source>
        <tissue>Eye</tissue>
        <tissue>PNS</tissue>
    </source>
</reference>
<reference key="6">
    <citation type="journal article" date="1996" name="Nat. Genet.">
        <title>Sex reversal by loss of the C-terminal transactivation domain of human SOX9.</title>
        <authorList>
            <person name="Suedbeck P."/>
            <person name="Schmitz M.L."/>
            <person name="Baeuerle P.A."/>
            <person name="Scherer G."/>
        </authorList>
    </citation>
    <scope>FUNCTION</scope>
    <scope>SUBCELLULAR LOCATION</scope>
    <scope>DNA-BINDING</scope>
</reference>
<reference key="7">
    <citation type="journal article" date="2003" name="J. Biol. Chem.">
        <title>Transcriptional co-activators CREB-binding protein and p300 regulate chondrocyte-specific gene expression via association with Sox9.</title>
        <authorList>
            <person name="Tsuda M."/>
            <person name="Takahashi S."/>
            <person name="Takahashi Y."/>
            <person name="Asahara H."/>
        </authorList>
    </citation>
    <scope>INTERACTION WITH EP300</scope>
</reference>
<reference key="8">
    <citation type="journal article" date="2011" name="N. Engl. J. Med.">
        <title>A SOX9 duplication and familial 46,XX developmental testicular disorder.</title>
        <authorList>
            <person name="Cox J.J."/>
            <person name="Willatt L."/>
            <person name="Homfray T."/>
            <person name="Woods C.G."/>
        </authorList>
    </citation>
    <scope>INVOLVEMENT IN SRXX2</scope>
</reference>
<reference key="9">
    <citation type="journal article" date="2015" name="J. Med. Genet.">
        <title>Copy number variation of two separate regulatory regions upstream of SOX9 causes isolated 46,XY or 46,XX disorder of sex development.</title>
        <authorList>
            <person name="Kim G.J."/>
            <person name="Sock E."/>
            <person name="Buchberger A."/>
            <person name="Just W."/>
            <person name="Denzer F."/>
            <person name="Hoepffner W."/>
            <person name="German J."/>
            <person name="Cole T."/>
            <person name="Mann J."/>
            <person name="Seguin J.H."/>
            <person name="Zipf W."/>
            <person name="Costigan C."/>
            <person name="Schmiady H."/>
            <person name="Rostasy M."/>
            <person name="Kramer M."/>
            <person name="Kaltenbach S."/>
            <person name="Roesler B."/>
            <person name="Georg I."/>
            <person name="Troppmann E."/>
            <person name="Teichmann A.C."/>
            <person name="Salfelder A."/>
            <person name="Widholz S.A."/>
            <person name="Wieacker P."/>
            <person name="Hiort O."/>
            <person name="Camerino G."/>
            <person name="Radi O."/>
            <person name="Wegner M."/>
            <person name="Arnold H.H."/>
            <person name="Scherer G."/>
        </authorList>
    </citation>
    <scope>INVOLVEMENT IN SRXY10</scope>
</reference>
<reference key="10">
    <citation type="journal article" date="2017" name="J. Clin. Invest.">
        <title>Loss of DDRGK1 modulates SOX9 ubiquitination in spondyloepimetaphyseal dysplasia.</title>
        <authorList>
            <person name="Egunsola A.T."/>
            <person name="Bae Y."/>
            <person name="Jiang M.M."/>
            <person name="Liu D.S."/>
            <person name="Chen-Evenson Y."/>
            <person name="Bertin T."/>
            <person name="Chen S."/>
            <person name="Lu J.T."/>
            <person name="Nevarez L."/>
            <person name="Magal N."/>
            <person name="Raas-Rothschild A."/>
            <person name="Swindell E.C."/>
            <person name="Cohn D.H."/>
            <person name="Gibbs R.A."/>
            <person name="Campeau P.M."/>
            <person name="Shohat M."/>
            <person name="Lee B.H."/>
        </authorList>
    </citation>
    <scope>INTERACTION WITH DDRGK1</scope>
    <scope>UBIQUITINATION</scope>
</reference>
<reference key="11">
    <citation type="journal article" date="2019" name="Curr. Opin. Cell Biol.">
        <title>SOX9 in cartilage development and disease.</title>
        <authorList>
            <person name="Lefebvre V."/>
            <person name="Angelozzi M."/>
            <person name="Haseeb A."/>
        </authorList>
    </citation>
    <scope>REVIEW</scope>
</reference>
<reference key="12">
    <citation type="journal article" date="2019" name="Nucleic Acids Res.">
        <title>The SOXE transcription factors-SOX8, SOX9 and SOX10-share a bi-partite transactivation mechanism.</title>
        <authorList>
            <person name="Haseeb A."/>
            <person name="Lefebvre V."/>
        </authorList>
    </citation>
    <scope>DOMAIN</scope>
    <scope>9AATAD MOTIFS</scope>
    <scope>MUTAGENESIS OF LEU-278; VAL-282; ASP-290; GLU-293; PHE-294; GLN-296; TYR-297 AND LEU-298</scope>
</reference>
<reference key="13">
    <citation type="journal article" date="2021" name="Stem. Cell. Rev. Rep.">
        <title>The 9aaTAD Activation Domains in the Yamanaka Transcription Factors Oct4, Sox2, Myc, and Klf4.</title>
        <authorList>
            <person name="Piskacek M."/>
            <person name="Otasevic T."/>
            <person name="Repko M."/>
            <person name="Knight A."/>
        </authorList>
    </citation>
    <scope>9AATAD MOTIF</scope>
</reference>
<reference key="14">
    <citation type="journal article" date="1997" name="Hum. Mutat.">
        <title>Mutations in SRY and SOX9: testis-determining genes.</title>
        <authorList>
            <person name="Cameron F.J."/>
            <person name="Sinclair A.H."/>
        </authorList>
    </citation>
    <scope>REVIEW ON VARIANTS</scope>
</reference>
<reference key="15">
    <citation type="journal article" date="1995" name="Am. J. Hum. Genet.">
        <title>Mutations in SOX9, the gene responsible for Campomelic dysplasia and autosomal sex reversal.</title>
        <authorList>
            <person name="Kwok C."/>
            <person name="Weller P.A."/>
            <person name="Guioli S."/>
            <person name="Foster J.W."/>
            <person name="Mansour S."/>
            <person name="Zuffardi O."/>
            <person name="Punnett H.H."/>
            <person name="Dominguez-Steglich M.A."/>
            <person name="Brook J.D."/>
            <person name="Young I.D."/>
            <person name="Goodfellow P.N."/>
            <person name="Schafer A.J."/>
        </authorList>
    </citation>
    <scope>VARIANTS CMD1 LEU-112 AND VAL-119</scope>
</reference>
<reference key="16">
    <citation type="journal article" date="1997" name="Hum. Mol. Genet.">
        <title>Mutational analysis of the SOX9 gene in campomelic dysplasia and autosomal sex reversal: lack of genotype/phenotype correlations.</title>
        <authorList>
            <person name="Meyer J."/>
            <person name="Suedbeck P."/>
            <person name="Held M."/>
            <person name="Wagner T."/>
            <person name="Schmitz M.L."/>
            <person name="Bricarelli F.D."/>
            <person name="Eggermont E."/>
            <person name="Friedrich U."/>
            <person name="Haas O.A."/>
            <person name="Kobelt A."/>
            <person name="Leroy J.G."/>
            <person name="van Maldergem L."/>
            <person name="Michel E."/>
            <person name="Mitulla B."/>
            <person name="Pfeiffer R.A."/>
            <person name="Schinzel A."/>
            <person name="Schmidt H."/>
            <person name="Scherer G."/>
        </authorList>
    </citation>
    <scope>VARIANTS CMD1 LEU-108; ARG-143; PRO-152 AND ARG-170</scope>
</reference>
<reference key="17">
    <citation type="journal article" date="1998" name="Hum. Mutat. Suppl.">
        <title>Novel missense mutation in the HMG box of SOX9 gene in a Japanese XY male resulted in campomelic dysplasia and severe defect in masculinization.</title>
        <authorList>
            <person name="Goji K."/>
            <person name="Nishijima E."/>
            <person name="Tsugawa C."/>
            <person name="Nishio H."/>
            <person name="Pokharel R.K."/>
            <person name="Matsuo M."/>
        </authorList>
    </citation>
    <scope>VARIANT CMD1 SER-112</scope>
</reference>
<reference key="18">
    <citation type="journal article" date="1999" name="J. Biol. Chem.">
        <title>Functional and structural studies of wild type SOX9 and mutations causing campomelic dysplasia.</title>
        <authorList>
            <person name="McDowall S."/>
            <person name="Argentaro A."/>
            <person name="Ranganathan S."/>
            <person name="Weller P."/>
            <person name="Mertin S."/>
            <person name="Mansour S."/>
            <person name="Tolmie J."/>
            <person name="Harley V."/>
        </authorList>
    </citation>
    <scope>VARIANTS CMD1 LEU-112; VAL-119; TYR-165 AND ARG-170</scope>
    <scope>3D-STRUCTURE MODELING</scope>
</reference>
<reference key="19">
    <citation type="journal article" date="2000" name="Am. J. Med. Genet.">
        <title>Acampomelic campomelic dysplasia with SOX9 mutation.</title>
        <authorList>
            <person name="Thong M.-K."/>
            <person name="Scherer G."/>
            <person name="Kozlowski K."/>
            <person name="Haan E."/>
            <person name="Morris L."/>
        </authorList>
    </citation>
    <scope>VARIANT CMD1 GLU-173</scope>
</reference>
<reference key="20">
    <citation type="journal article" date="2001" name="Am. J. Med. Genet.">
        <title>Acampomelic campomelic syndrome.</title>
        <authorList>
            <person name="Moog U."/>
            <person name="Jansen N.J."/>
            <person name="Scherer G."/>
            <person name="Schrander-Stumpel C.T."/>
        </authorList>
    </citation>
    <scope>VARIANT CMD1 TYR-165</scope>
</reference>
<reference key="21">
    <citation type="journal article" date="2001" name="J. Biol. Chem.">
        <title>Compound effects of point mutations causing campomelic dysplasia/autosomal sex reversal upon SOX9 structure, nuclear transport, DNA binding, and transcriptional activation.</title>
        <authorList>
            <person name="Preiss S."/>
            <person name="Argentaro A."/>
            <person name="Clayton A."/>
            <person name="John A."/>
            <person name="Jans D.A."/>
            <person name="Ogata T."/>
            <person name="Nagai T."/>
            <person name="Barroso I."/>
            <person name="Schafer A.J."/>
            <person name="Harley V.R."/>
        </authorList>
    </citation>
    <scope>VARIANTS CMD1 LEU-154 AND THR-158</scope>
    <scope>CHARACTERIZATION OF VARIANTS CMD1 LEU-154 AND THR-158</scope>
</reference>
<reference key="22">
    <citation type="journal article" date="2003" name="Hum. Mol. Genet.">
        <title>Loss of DNA-dependent dimerization of the transcription factor SOX9 as a cause for campomelic dysplasia.</title>
        <authorList>
            <person name="Sock E."/>
            <person name="Pagon R.A."/>
            <person name="Keymolen K."/>
            <person name="Lissens W."/>
            <person name="Wegner M."/>
            <person name="Scherer G."/>
        </authorList>
    </citation>
    <scope>VARIANT CMD1 GLU-76</scope>
</reference>
<reference key="23">
    <citation type="journal article" date="2008" name="Fetal Diagn. Ther.">
        <title>Campomelic dysplasia: echographic suspicion in the first trimester of pregnancy and final diagnosis of two cases.</title>
        <authorList>
            <person name="Massardier J."/>
            <person name="Roth P."/>
            <person name="Michel-Calemard L."/>
            <person name="Rudigoz R.C."/>
            <person name="Bouvier R."/>
            <person name="Dijoud F."/>
            <person name="Arnould P."/>
            <person name="Combourieu D."/>
            <person name="Gaucherand P."/>
        </authorList>
    </citation>
    <scope>VARIANTS CMD1 28-GLU--PRO-509 DEL AND PRO-169</scope>
</reference>
<reference key="24">
    <citation type="journal article" date="2009" name="Am. J. Med. Genet. A">
        <title>Mutation analysis of SOX9 and single copy number variant analysis of the upstream region in eight patients with campomelic dysplasia and acampomelic campomelic dysplasia.</title>
        <authorList>
            <person name="Wada Y."/>
            <person name="Nishimura G."/>
            <person name="Nagai T."/>
            <person name="Sawai H."/>
            <person name="Yoshikata M."/>
            <person name="Miyagawa S."/>
            <person name="Hanita T."/>
            <person name="Sato S."/>
            <person name="Hasegawa T."/>
            <person name="Ishikawa S."/>
            <person name="Ogata T."/>
        </authorList>
    </citation>
    <scope>VARIANTS CMD1 THR-113 AND LEU-170</scope>
</reference>
<reference key="25">
    <citation type="journal article" date="2010" name="Hum. Mutat.">
        <title>Heterozygous SOX9 mutations allowing for residual DNA-binding and transcriptional activation lead to the acampomelic variant of campomelic dysplasia.</title>
        <authorList>
            <person name="Staffler A."/>
            <person name="Hammel M."/>
            <person name="Wahlbuhl M."/>
            <person name="Bidlingmaier C."/>
            <person name="Flemmer A.W."/>
            <person name="Pagel P."/>
            <person name="Nicolai T."/>
            <person name="Wegner M."/>
            <person name="Holzinger A."/>
        </authorList>
    </citation>
    <scope>VARIANTS CMD1 VAL-113 AND GLN-165</scope>
    <scope>CHARACTERIZATION OF VARIANTS CMD1 VAL-113 AND GLN-165</scope>
</reference>
<reference key="26">
    <citation type="journal article" date="2013" name="Am. J. Med. Genet. A">
        <title>A novel SOX9 H169Q mutation in a family with overlapping phenotype of mild campomelic dysplasia and small patella syndrome.</title>
        <authorList>
            <person name="Matsushita M."/>
            <person name="Kitoh H."/>
            <person name="Kaneko H."/>
            <person name="Mishima K."/>
            <person name="Kadono I."/>
            <person name="Ishiguro N."/>
            <person name="Nishimura G."/>
        </authorList>
    </citation>
    <scope>VARIANT CMD1 GLN-169</scope>
    <scope>CHARACTERIZATION OF VARIANT CMD1 GLN-169</scope>
    <scope>CHARACTERIZATION OF VARIANT PRO-169</scope>
    <scope>FUNCTION</scope>
</reference>
<name>SOX9_HUMAN</name>
<accession>P48436</accession>
<accession>Q53Y80</accession>
<sequence length="509" mass="56137">MNLLDPFMKMTDEQEKGLSGAPSPTMSEDSAGSPCPSGSGSDTENTRPQENTFPKGEPDLKKESEEDKFPVCIREAVSQVLKGYDWTLVPMPVRVNGSSKNKPHVKRPMNAFMVWAQAARRKLADQYPHLHNAELSKTLGKLWRLLNESEKRPFVEEAERLRVQHKKDHPDYKYQPRRRKSVKNGQAEAEEATEQTHISPNAIFKALQADSPHSSSGMSEVHSPGEHSGQSQGPPTPPTTPKTDVQPGKADLKREGRPLPEGGRQPPIDFRDVDIGELSSDVISNIETFDVNEFDQYLPPNGHPGVPATHGQVTYTGSYGISSTAATPASAGHVWMSKQQAPPPPPQQPPQAPPAPQAPPQPQAAPPQQPAAPPQQPQAHTLTTLSSEPGQSQRTHIKTEQLSPSHYSEQQQHSPQQIAYSPFNLPHYSPSYPPITRSQYDYTDHQNSSSYYSHAAGQGTGLYSTFTYMNPAQRPMYTPIADTSGVPSIPQTHSPQHWEQPVYTQLTRP</sequence>
<evidence type="ECO:0000250" key="1">
    <source>
        <dbReference type="UniProtKB" id="Q04887"/>
    </source>
</evidence>
<evidence type="ECO:0000255" key="2">
    <source>
        <dbReference type="PROSITE-ProRule" id="PRU00267"/>
    </source>
</evidence>
<evidence type="ECO:0000256" key="3">
    <source>
        <dbReference type="SAM" id="MobiDB-lite"/>
    </source>
</evidence>
<evidence type="ECO:0000269" key="4">
    <source>
    </source>
</evidence>
<evidence type="ECO:0000269" key="5">
    <source>
    </source>
</evidence>
<evidence type="ECO:0000269" key="6">
    <source>
    </source>
</evidence>
<evidence type="ECO:0000269" key="7">
    <source>
    </source>
</evidence>
<evidence type="ECO:0000269" key="8">
    <source>
    </source>
</evidence>
<evidence type="ECO:0000269" key="9">
    <source>
    </source>
</evidence>
<evidence type="ECO:0000269" key="10">
    <source>
    </source>
</evidence>
<evidence type="ECO:0000269" key="11">
    <source>
    </source>
</evidence>
<evidence type="ECO:0000269" key="12">
    <source>
    </source>
</evidence>
<evidence type="ECO:0000269" key="13">
    <source>
    </source>
</evidence>
<evidence type="ECO:0000269" key="14">
    <source>
    </source>
</evidence>
<evidence type="ECO:0000269" key="15">
    <source>
    </source>
</evidence>
<evidence type="ECO:0000269" key="16">
    <source>
    </source>
</evidence>
<evidence type="ECO:0000269" key="17">
    <source>
    </source>
</evidence>
<evidence type="ECO:0000269" key="18">
    <source>
    </source>
</evidence>
<evidence type="ECO:0000269" key="19">
    <source>
    </source>
</evidence>
<evidence type="ECO:0000269" key="20">
    <source>
    </source>
</evidence>
<evidence type="ECO:0000269" key="21">
    <source>
    </source>
</evidence>
<evidence type="ECO:0000269" key="22">
    <source>
    </source>
</evidence>
<evidence type="ECO:0000269" key="23">
    <source>
    </source>
</evidence>
<evidence type="ECO:0000269" key="24">
    <source>
    </source>
</evidence>
<evidence type="ECO:0000303" key="25">
    <source>
    </source>
</evidence>
<evidence type="ECO:0000305" key="26"/>
<evidence type="ECO:0000305" key="27">
    <source>
    </source>
</evidence>
<evidence type="ECO:0000312" key="28">
    <source>
        <dbReference type="HGNC" id="HGNC:11204"/>
    </source>
</evidence>
<evidence type="ECO:0007829" key="29">
    <source>
        <dbReference type="PDB" id="4EUW"/>
    </source>
</evidence>
<organism>
    <name type="scientific">Homo sapiens</name>
    <name type="common">Human</name>
    <dbReference type="NCBI Taxonomy" id="9606"/>
    <lineage>
        <taxon>Eukaryota</taxon>
        <taxon>Metazoa</taxon>
        <taxon>Chordata</taxon>
        <taxon>Craniata</taxon>
        <taxon>Vertebrata</taxon>
        <taxon>Euteleostomi</taxon>
        <taxon>Mammalia</taxon>
        <taxon>Eutheria</taxon>
        <taxon>Euarchontoglires</taxon>
        <taxon>Primates</taxon>
        <taxon>Haplorrhini</taxon>
        <taxon>Catarrhini</taxon>
        <taxon>Hominidae</taxon>
        <taxon>Homo</taxon>
    </lineage>
</organism>
<feature type="chain" id="PRO_0000048739" description="Transcription factor SOX-9">
    <location>
        <begin position="1"/>
        <end position="509"/>
    </location>
</feature>
<feature type="DNA-binding region" description="HMG box" evidence="2">
    <location>
        <begin position="105"/>
        <end position="173"/>
    </location>
</feature>
<feature type="region of interest" description="Disordered" evidence="3">
    <location>
        <begin position="1"/>
        <end position="67"/>
    </location>
</feature>
<feature type="region of interest" description="Dimerization (DIM)" evidence="27">
    <location>
        <begin position="63"/>
        <end position="103"/>
    </location>
</feature>
<feature type="region of interest" description="PQA" evidence="27">
    <location>
        <begin position="63"/>
        <end position="103"/>
    </location>
</feature>
<feature type="region of interest" description="Disordered" evidence="3">
    <location>
        <begin position="160"/>
        <end position="273"/>
    </location>
</feature>
<feature type="region of interest" description="Transactivation domain (TAM)" evidence="17">
    <location>
        <begin position="224"/>
        <end position="307"/>
    </location>
</feature>
<feature type="region of interest" description="Disordered" evidence="3">
    <location>
        <begin position="330"/>
        <end position="415"/>
    </location>
</feature>
<feature type="region of interest" description="Transactivation domain (TAC)" evidence="22">
    <location>
        <begin position="394"/>
        <end position="509"/>
    </location>
</feature>
<feature type="region of interest" description="Disordered" evidence="3">
    <location>
        <begin position="479"/>
        <end position="509"/>
    </location>
</feature>
<feature type="short sequence motif" description="9aaTAD 1" evidence="17">
    <location>
        <begin position="275"/>
        <end position="284"/>
    </location>
</feature>
<feature type="short sequence motif" description="9aaTAD 2" evidence="17">
    <location>
        <begin position="290"/>
        <end position="298"/>
    </location>
</feature>
<feature type="short sequence motif" description="9aaTAD 3" evidence="18">
    <location>
        <begin position="460"/>
        <end position="468"/>
    </location>
</feature>
<feature type="compositionally biased region" description="Low complexity" evidence="3">
    <location>
        <begin position="30"/>
        <end position="41"/>
    </location>
</feature>
<feature type="compositionally biased region" description="Polar residues" evidence="3">
    <location>
        <begin position="42"/>
        <end position="52"/>
    </location>
</feature>
<feature type="compositionally biased region" description="Basic and acidic residues" evidence="3">
    <location>
        <begin position="56"/>
        <end position="67"/>
    </location>
</feature>
<feature type="compositionally biased region" description="Basic and acidic residues" evidence="3">
    <location>
        <begin position="160"/>
        <end position="174"/>
    </location>
</feature>
<feature type="compositionally biased region" description="Pro residues" evidence="3">
    <location>
        <begin position="341"/>
        <end position="376"/>
    </location>
</feature>
<feature type="compositionally biased region" description="Polar residues" evidence="3">
    <location>
        <begin position="380"/>
        <end position="415"/>
    </location>
</feature>
<feature type="compositionally biased region" description="Polar residues" evidence="3">
    <location>
        <begin position="485"/>
        <end position="509"/>
    </location>
</feature>
<feature type="modified residue" description="Phosphoserine" evidence="1">
    <location>
        <position position="64"/>
    </location>
</feature>
<feature type="modified residue" description="Phosphoserine" evidence="1">
    <location>
        <position position="211"/>
    </location>
</feature>
<feature type="cross-link" description="Glycyl lysine isopeptide (Lys-Gly) (interchain with G-Cter in ubiquitin)" evidence="1">
    <location>
        <position position="398"/>
    </location>
</feature>
<feature type="sequence variant" id="VAR_078490" description="In CMD1." evidence="10">
    <location>
        <begin position="28"/>
        <end position="509"/>
    </location>
</feature>
<feature type="sequence variant" id="VAR_063642" description="In CMD1; dimerization and the resulting capacity to activate promoters via dimeric binding sites is lost; other features of the protein function remain unaltered; dbSNP:rs137853128." evidence="9">
    <original>A</original>
    <variation>E</variation>
    <location>
        <position position="76"/>
    </location>
</feature>
<feature type="sequence variant" id="VAR_003735" description="In CMD1; dbSNP:rs2143239919." evidence="23">
    <original>P</original>
    <variation>L</variation>
    <location>
        <position position="108"/>
    </location>
</feature>
<feature type="sequence variant" id="VAR_003736" description="In CMD1; loss of DNA binding; dbSNP:rs1407667250." evidence="4 19">
    <original>F</original>
    <variation>L</variation>
    <location>
        <position position="112"/>
    </location>
</feature>
<feature type="sequence variant" id="VAR_003737" description="In CMD1." evidence="24">
    <original>F</original>
    <variation>S</variation>
    <location>
        <position position="112"/>
    </location>
</feature>
<feature type="sequence variant" id="VAR_063643" description="In CMD1." evidence="11">
    <original>M</original>
    <variation>T</variation>
    <location>
        <position position="113"/>
    </location>
</feature>
<feature type="sequence variant" id="VAR_063644" description="In CMD1; residual DNA binding and transactivation of regulated genes; dbSNP:rs2143240089." evidence="12">
    <original>M</original>
    <variation>V</variation>
    <location>
        <position position="113"/>
    </location>
</feature>
<feature type="sequence variant" id="VAR_003738" description="In CMD1; almost no loss of DNA binding; dbSNP:rs886043537." evidence="4 19">
    <original>A</original>
    <variation>V</variation>
    <location>
        <position position="119"/>
    </location>
</feature>
<feature type="sequence variant" id="VAR_003739" description="In CMD1." evidence="23">
    <original>W</original>
    <variation>R</variation>
    <location>
        <position position="143"/>
    </location>
</feature>
<feature type="sequence variant" id="VAR_003740" description="In CMD1; dbSNP:rs2143245214." evidence="23">
    <original>R</original>
    <variation>P</variation>
    <location>
        <position position="152"/>
    </location>
</feature>
<feature type="sequence variant" id="VAR_008529" description="In CMD1; 5% of wild-type DNA binding activity; transcriptional activation is only reduced to 26% of wild-type activity; dbSNP:rs137853129." evidence="6">
    <original>F</original>
    <variation>L</variation>
    <location>
        <position position="154"/>
    </location>
</feature>
<feature type="sequence variant" id="VAR_008530" description="In CMD1; 17% of wild-type DNA binding activity; shows a 2-fold reduction in nuclear import efficiency; transcriptional activation is only reduced to 62% of wild-type activity; dbSNP:rs137853130." evidence="6">
    <original>A</original>
    <variation>T</variation>
    <location>
        <position position="158"/>
    </location>
</feature>
<feature type="sequence variant" id="VAR_063645" description="In CMD1; residual DNA binding and transactivation of regulated genes; dbSNP:rs2143245705." evidence="12">
    <original>H</original>
    <variation>Q</variation>
    <location>
        <position position="165"/>
    </location>
</feature>
<feature type="sequence variant" id="VAR_008531" description="In CMD1; loss of DNA binding; dbSNP:rs28940282." evidence="4 7">
    <original>H</original>
    <variation>Y</variation>
    <location>
        <position position="165"/>
    </location>
</feature>
<feature type="sequence variant" id="VAR_078491" description="In CMD1; decreased 75% transactivational activity." evidence="10 14">
    <original>H</original>
    <variation>P</variation>
    <location>
        <position position="169"/>
    </location>
</feature>
<feature type="sequence variant" id="VAR_078492" description="In CMD1; mild form overlapping with small patella syndrome; decreased 50% transactivational activity; dbSNP:rs2229989." evidence="14">
    <original>H</original>
    <variation>Q</variation>
    <location>
        <position position="169"/>
    </location>
</feature>
<feature type="sequence variant" id="VAR_063646" description="In CMD1; dbSNP:rs1131691554." evidence="11">
    <original>P</original>
    <variation>L</variation>
    <location>
        <position position="170"/>
    </location>
</feature>
<feature type="sequence variant" id="VAR_003741" description="In CMD1; dbSNP:rs1131691554." evidence="4 23">
    <original>P</original>
    <variation>R</variation>
    <location>
        <position position="170"/>
    </location>
</feature>
<feature type="sequence variant" id="VAR_063647" description="In CMD1; dbSNP:rs104894647." evidence="5">
    <original>K</original>
    <variation>E</variation>
    <location>
        <position position="173"/>
    </location>
</feature>
<feature type="sequence variant" id="VAR_003742" description="In CMD1.">
    <location>
        <begin position="354"/>
        <end position="356"/>
    </location>
</feature>
<feature type="sequence variant" id="VAR_083521" description="In CMD1." evidence="21">
    <location>
        <begin position="440"/>
        <end position="509"/>
    </location>
</feature>
<feature type="mutagenesis site" description="Impaired ability to activate transcription in vitro." evidence="17">
    <original>L</original>
    <variation>S</variation>
    <location>
        <position position="278"/>
    </location>
</feature>
<feature type="mutagenesis site" description="Impaired ability to activate transcription in vitro." evidence="17">
    <original>V</original>
    <variation>D</variation>
    <location>
        <position position="282"/>
    </location>
</feature>
<feature type="mutagenesis site" description="Impaired ability to activate transcription in vitro." evidence="17">
    <original>D</original>
    <variation>A</variation>
    <location>
        <position position="290"/>
    </location>
</feature>
<feature type="mutagenesis site" description="Impaired ability to activate transcription in vitro." evidence="17">
    <original>E</original>
    <variation>M</variation>
    <variation>T</variation>
    <location>
        <position position="293"/>
    </location>
</feature>
<feature type="mutagenesis site" description="Does not affect ability to activate transcription in vitro." evidence="17">
    <original>F</original>
    <variation>L</variation>
    <location>
        <position position="294"/>
    </location>
</feature>
<feature type="mutagenesis site" description="Impaired ability to activate transcription in vitro." evidence="17">
    <original>F</original>
    <variation>S</variation>
    <variation>A</variation>
    <location>
        <position position="294"/>
    </location>
</feature>
<feature type="mutagenesis site" description="Impaired, but not abolished, ability to activate transcription in vitro." evidence="17">
    <original>Q</original>
    <variation>R</variation>
    <location>
        <position position="296"/>
    </location>
</feature>
<feature type="mutagenesis site" description="Impaired ability to activate transcription in vitro." evidence="17">
    <original>Y</original>
    <variation>L</variation>
    <variation>S</variation>
    <variation>D</variation>
    <variation>F</variation>
    <location>
        <position position="297"/>
    </location>
</feature>
<feature type="mutagenesis site" description="Impaired ability to activate transcription in vitro." evidence="17">
    <original>L</original>
    <variation>D</variation>
    <location>
        <position position="298"/>
    </location>
</feature>
<feature type="helix" evidence="29">
    <location>
        <begin position="111"/>
        <end position="126"/>
    </location>
</feature>
<feature type="helix" evidence="29">
    <location>
        <begin position="132"/>
        <end position="143"/>
    </location>
</feature>
<feature type="helix" evidence="29">
    <location>
        <begin position="148"/>
        <end position="168"/>
    </location>
</feature>
<keyword id="KW-0002">3D-structure</keyword>
<keyword id="KW-0007">Acetylation</keyword>
<keyword id="KW-0010">Activator</keyword>
<keyword id="KW-0221">Differentiation</keyword>
<keyword id="KW-0225">Disease variant</keyword>
<keyword id="KW-0238">DNA-binding</keyword>
<keyword id="KW-1017">Isopeptide bond</keyword>
<keyword id="KW-0539">Nucleus</keyword>
<keyword id="KW-0597">Phosphoprotein</keyword>
<keyword id="KW-1267">Proteomics identification</keyword>
<keyword id="KW-1185">Reference proteome</keyword>
<keyword id="KW-0804">Transcription</keyword>
<keyword id="KW-0805">Transcription regulation</keyword>
<keyword id="KW-0832">Ubl conjugation</keyword>
<protein>
    <recommendedName>
        <fullName evidence="26">Transcription factor SOX-9</fullName>
    </recommendedName>
</protein>